<accession>Q88VL9</accession>
<accession>F9UPY5</accession>
<name>GRPE_LACPL</name>
<feature type="chain" id="PRO_0000113801" description="Protein GrpE">
    <location>
        <begin position="1"/>
        <end position="199"/>
    </location>
</feature>
<feature type="region of interest" description="Disordered" evidence="2">
    <location>
        <begin position="1"/>
        <end position="50"/>
    </location>
</feature>
<feature type="compositionally biased region" description="Low complexity" evidence="2">
    <location>
        <begin position="11"/>
        <end position="46"/>
    </location>
</feature>
<dbReference type="EMBL" id="AL935263">
    <property type="protein sequence ID" value="CCC79274.1"/>
    <property type="molecule type" value="Genomic_DNA"/>
</dbReference>
<dbReference type="RefSeq" id="WP_011101637.1">
    <property type="nucleotide sequence ID" value="NC_004567.2"/>
</dbReference>
<dbReference type="RefSeq" id="YP_004889788.1">
    <property type="nucleotide sequence ID" value="NC_004567.2"/>
</dbReference>
<dbReference type="SMR" id="Q88VL9"/>
<dbReference type="STRING" id="220668.lp_2028"/>
<dbReference type="DNASU" id="1062226"/>
<dbReference type="EnsemblBacteria" id="CCC79274">
    <property type="protein sequence ID" value="CCC79274"/>
    <property type="gene ID" value="lp_2028"/>
</dbReference>
<dbReference type="KEGG" id="lpl:lp_2028"/>
<dbReference type="PATRIC" id="fig|220668.9.peg.1713"/>
<dbReference type="eggNOG" id="COG0576">
    <property type="taxonomic scope" value="Bacteria"/>
</dbReference>
<dbReference type="HOGENOM" id="CLU_057217_6_3_9"/>
<dbReference type="OrthoDB" id="9812586at2"/>
<dbReference type="PhylomeDB" id="Q88VL9"/>
<dbReference type="Proteomes" id="UP000000432">
    <property type="component" value="Chromosome"/>
</dbReference>
<dbReference type="GO" id="GO:0005737">
    <property type="term" value="C:cytoplasm"/>
    <property type="evidence" value="ECO:0007669"/>
    <property type="project" value="UniProtKB-SubCell"/>
</dbReference>
<dbReference type="GO" id="GO:0000774">
    <property type="term" value="F:adenyl-nucleotide exchange factor activity"/>
    <property type="evidence" value="ECO:0007669"/>
    <property type="project" value="InterPro"/>
</dbReference>
<dbReference type="GO" id="GO:0042803">
    <property type="term" value="F:protein homodimerization activity"/>
    <property type="evidence" value="ECO:0007669"/>
    <property type="project" value="InterPro"/>
</dbReference>
<dbReference type="GO" id="GO:0051087">
    <property type="term" value="F:protein-folding chaperone binding"/>
    <property type="evidence" value="ECO:0007669"/>
    <property type="project" value="InterPro"/>
</dbReference>
<dbReference type="GO" id="GO:0051082">
    <property type="term" value="F:unfolded protein binding"/>
    <property type="evidence" value="ECO:0007669"/>
    <property type="project" value="TreeGrafter"/>
</dbReference>
<dbReference type="GO" id="GO:0006457">
    <property type="term" value="P:protein folding"/>
    <property type="evidence" value="ECO:0007669"/>
    <property type="project" value="InterPro"/>
</dbReference>
<dbReference type="CDD" id="cd00446">
    <property type="entry name" value="GrpE"/>
    <property type="match status" value="1"/>
</dbReference>
<dbReference type="FunFam" id="2.30.22.10:FF:000001">
    <property type="entry name" value="Protein GrpE"/>
    <property type="match status" value="1"/>
</dbReference>
<dbReference type="Gene3D" id="3.90.20.20">
    <property type="match status" value="1"/>
</dbReference>
<dbReference type="Gene3D" id="2.30.22.10">
    <property type="entry name" value="Head domain of nucleotide exchange factor GrpE"/>
    <property type="match status" value="1"/>
</dbReference>
<dbReference type="HAMAP" id="MF_01151">
    <property type="entry name" value="GrpE"/>
    <property type="match status" value="1"/>
</dbReference>
<dbReference type="InterPro" id="IPR000740">
    <property type="entry name" value="GrpE"/>
</dbReference>
<dbReference type="InterPro" id="IPR013805">
    <property type="entry name" value="GrpE_coiled_coil"/>
</dbReference>
<dbReference type="InterPro" id="IPR009012">
    <property type="entry name" value="GrpE_head"/>
</dbReference>
<dbReference type="NCBIfam" id="NF010738">
    <property type="entry name" value="PRK14140.1"/>
    <property type="match status" value="1"/>
</dbReference>
<dbReference type="NCBIfam" id="NF010759">
    <property type="entry name" value="PRK14162.1"/>
    <property type="match status" value="1"/>
</dbReference>
<dbReference type="PANTHER" id="PTHR21237">
    <property type="entry name" value="GRPE PROTEIN"/>
    <property type="match status" value="1"/>
</dbReference>
<dbReference type="PANTHER" id="PTHR21237:SF23">
    <property type="entry name" value="GRPE PROTEIN HOMOLOG, MITOCHONDRIAL"/>
    <property type="match status" value="1"/>
</dbReference>
<dbReference type="Pfam" id="PF01025">
    <property type="entry name" value="GrpE"/>
    <property type="match status" value="1"/>
</dbReference>
<dbReference type="PRINTS" id="PR00773">
    <property type="entry name" value="GRPEPROTEIN"/>
</dbReference>
<dbReference type="SUPFAM" id="SSF58014">
    <property type="entry name" value="Coiled-coil domain of nucleotide exchange factor GrpE"/>
    <property type="match status" value="1"/>
</dbReference>
<dbReference type="SUPFAM" id="SSF51064">
    <property type="entry name" value="Head domain of nucleotide exchange factor GrpE"/>
    <property type="match status" value="1"/>
</dbReference>
<dbReference type="PROSITE" id="PS01071">
    <property type="entry name" value="GRPE"/>
    <property type="match status" value="1"/>
</dbReference>
<protein>
    <recommendedName>
        <fullName evidence="1">Protein GrpE</fullName>
    </recommendedName>
    <alternativeName>
        <fullName evidence="1">HSP-70 cofactor</fullName>
    </alternativeName>
</protein>
<keyword id="KW-0143">Chaperone</keyword>
<keyword id="KW-0963">Cytoplasm</keyword>
<keyword id="KW-1185">Reference proteome</keyword>
<keyword id="KW-0346">Stress response</keyword>
<evidence type="ECO:0000255" key="1">
    <source>
        <dbReference type="HAMAP-Rule" id="MF_01151"/>
    </source>
</evidence>
<evidence type="ECO:0000256" key="2">
    <source>
        <dbReference type="SAM" id="MobiDB-lite"/>
    </source>
</evidence>
<sequence length="199" mass="21443">MAKKSTRTTPEDSQASTTDSAATSTASEATQAATSATDDQAEQTTAVDPTQQITDLKAQLDAKDDQLLRAQAEIVNMQNRNKKEQAALLKYDGQALAKDVLPVLDNLERALATPADDEAAQQLKKGVEMVYGHLQDALKKHGVTEVAAAGEKFDPNIHQAVQTVPVDDDHPADTVVQVLQRGYLLKDRTLRPAMVVVAQ</sequence>
<comment type="function">
    <text evidence="1">Participates actively in the response to hyperosmotic and heat shock by preventing the aggregation of stress-denatured proteins, in association with DnaK and GrpE. It is the nucleotide exchange factor for DnaK and may function as a thermosensor. Unfolded proteins bind initially to DnaJ; upon interaction with the DnaJ-bound protein, DnaK hydrolyzes its bound ATP, resulting in the formation of a stable complex. GrpE releases ADP from DnaK; ATP binding to DnaK triggers the release of the substrate protein, thus completing the reaction cycle. Several rounds of ATP-dependent interactions between DnaJ, DnaK and GrpE are required for fully efficient folding.</text>
</comment>
<comment type="subunit">
    <text evidence="1">Homodimer.</text>
</comment>
<comment type="subcellular location">
    <subcellularLocation>
        <location evidence="1">Cytoplasm</location>
    </subcellularLocation>
</comment>
<comment type="similarity">
    <text evidence="1">Belongs to the GrpE family.</text>
</comment>
<gene>
    <name evidence="1" type="primary">grpE</name>
    <name type="ordered locus">lp_2028</name>
</gene>
<proteinExistence type="inferred from homology"/>
<reference key="1">
    <citation type="journal article" date="2003" name="Proc. Natl. Acad. Sci. U.S.A.">
        <title>Complete genome sequence of Lactobacillus plantarum WCFS1.</title>
        <authorList>
            <person name="Kleerebezem M."/>
            <person name="Boekhorst J."/>
            <person name="van Kranenburg R."/>
            <person name="Molenaar D."/>
            <person name="Kuipers O.P."/>
            <person name="Leer R."/>
            <person name="Tarchini R."/>
            <person name="Peters S.A."/>
            <person name="Sandbrink H.M."/>
            <person name="Fiers M.W.E.J."/>
            <person name="Stiekema W."/>
            <person name="Klein Lankhorst R.M."/>
            <person name="Bron P.A."/>
            <person name="Hoffer S.M."/>
            <person name="Nierop Groot M.N."/>
            <person name="Kerkhoven R."/>
            <person name="De Vries M."/>
            <person name="Ursing B."/>
            <person name="De Vos W.M."/>
            <person name="Siezen R.J."/>
        </authorList>
    </citation>
    <scope>NUCLEOTIDE SEQUENCE [LARGE SCALE GENOMIC DNA]</scope>
    <source>
        <strain>ATCC BAA-793 / NCIMB 8826 / WCFS1</strain>
    </source>
</reference>
<reference key="2">
    <citation type="journal article" date="2012" name="J. Bacteriol.">
        <title>Complete resequencing and reannotation of the Lactobacillus plantarum WCFS1 genome.</title>
        <authorList>
            <person name="Siezen R.J."/>
            <person name="Francke C."/>
            <person name="Renckens B."/>
            <person name="Boekhorst J."/>
            <person name="Wels M."/>
            <person name="Kleerebezem M."/>
            <person name="van Hijum S.A."/>
        </authorList>
    </citation>
    <scope>NUCLEOTIDE SEQUENCE [LARGE SCALE GENOMIC DNA]</scope>
    <scope>GENOME REANNOTATION</scope>
    <source>
        <strain>ATCC BAA-793 / NCIMB 8826 / WCFS1</strain>
    </source>
</reference>
<organism>
    <name type="scientific">Lactiplantibacillus plantarum (strain ATCC BAA-793 / NCIMB 8826 / WCFS1)</name>
    <name type="common">Lactobacillus plantarum</name>
    <dbReference type="NCBI Taxonomy" id="220668"/>
    <lineage>
        <taxon>Bacteria</taxon>
        <taxon>Bacillati</taxon>
        <taxon>Bacillota</taxon>
        <taxon>Bacilli</taxon>
        <taxon>Lactobacillales</taxon>
        <taxon>Lactobacillaceae</taxon>
        <taxon>Lactiplantibacillus</taxon>
    </lineage>
</organism>